<comment type="function">
    <text evidence="1">Part of the binding-protein-dependent transport system for glutamine; probably responsible for the translocation of the substrate across the membrane.</text>
</comment>
<comment type="subcellular location">
    <subcellularLocation>
        <location evidence="1">Cell inner membrane</location>
        <topology evidence="3">Multi-pass membrane protein</topology>
    </subcellularLocation>
</comment>
<comment type="induction">
    <text evidence="1">By lack of glutamine.</text>
</comment>
<comment type="similarity">
    <text evidence="4">Belongs to the binding-protein-dependent transport system permease family. HisMQ subfamily.</text>
</comment>
<keyword id="KW-0029">Amino-acid transport</keyword>
<keyword id="KW-0997">Cell inner membrane</keyword>
<keyword id="KW-1003">Cell membrane</keyword>
<keyword id="KW-0472">Membrane</keyword>
<keyword id="KW-1185">Reference proteome</keyword>
<keyword id="KW-0812">Transmembrane</keyword>
<keyword id="KW-1133">Transmembrane helix</keyword>
<keyword id="KW-0813">Transport</keyword>
<proteinExistence type="inferred from homology"/>
<accession>P0AEQ7</accession>
<accession>P10345</accession>
<accession>P76825</accession>
<feature type="chain" id="PRO_0000060032" description="Glutamine transport system permease protein GlnP">
    <location>
        <begin position="1"/>
        <end position="219"/>
    </location>
</feature>
<feature type="topological domain" description="Periplasmic" evidence="2">
    <location>
        <begin position="1"/>
        <end position="22"/>
    </location>
</feature>
<feature type="transmembrane region" description="Helical" evidence="3">
    <location>
        <begin position="23"/>
        <end position="43"/>
    </location>
</feature>
<feature type="topological domain" description="Cytoplasmic" evidence="2">
    <location>
        <begin position="44"/>
        <end position="53"/>
    </location>
</feature>
<feature type="transmembrane region" description="Helical" evidence="3">
    <location>
        <begin position="54"/>
        <end position="74"/>
    </location>
</feature>
<feature type="topological domain" description="Periplasmic" evidence="2">
    <location>
        <begin position="75"/>
        <end position="88"/>
    </location>
</feature>
<feature type="transmembrane region" description="Helical" evidence="3">
    <location>
        <begin position="89"/>
        <end position="109"/>
    </location>
</feature>
<feature type="topological domain" description="Cytoplasmic" evidence="2">
    <location>
        <begin position="110"/>
        <end position="150"/>
    </location>
</feature>
<feature type="transmembrane region" description="Helical" evidence="3">
    <location>
        <begin position="151"/>
        <end position="171"/>
    </location>
</feature>
<feature type="topological domain" description="Periplasmic" evidence="2">
    <location>
        <begin position="172"/>
        <end position="187"/>
    </location>
</feature>
<feature type="transmembrane region" description="Helical" evidence="3">
    <location>
        <begin position="188"/>
        <end position="208"/>
    </location>
</feature>
<feature type="topological domain" description="Cytoplasmic" evidence="2">
    <location>
        <begin position="209"/>
        <end position="219"/>
    </location>
</feature>
<feature type="domain" description="ABC transmembrane type-1" evidence="3">
    <location>
        <begin position="19"/>
        <end position="209"/>
    </location>
</feature>
<organism>
    <name type="scientific">Escherichia coli O6:H1 (strain CFT073 / ATCC 700928 / UPEC)</name>
    <dbReference type="NCBI Taxonomy" id="199310"/>
    <lineage>
        <taxon>Bacteria</taxon>
        <taxon>Pseudomonadati</taxon>
        <taxon>Pseudomonadota</taxon>
        <taxon>Gammaproteobacteria</taxon>
        <taxon>Enterobacterales</taxon>
        <taxon>Enterobacteriaceae</taxon>
        <taxon>Escherichia</taxon>
    </lineage>
</organism>
<evidence type="ECO:0000250" key="1"/>
<evidence type="ECO:0000255" key="2"/>
<evidence type="ECO:0000255" key="3">
    <source>
        <dbReference type="PROSITE-ProRule" id="PRU00441"/>
    </source>
</evidence>
<evidence type="ECO:0000305" key="4"/>
<reference key="1">
    <citation type="journal article" date="2002" name="Proc. Natl. Acad. Sci. U.S.A.">
        <title>Extensive mosaic structure revealed by the complete genome sequence of uropathogenic Escherichia coli.</title>
        <authorList>
            <person name="Welch R.A."/>
            <person name="Burland V."/>
            <person name="Plunkett G. III"/>
            <person name="Redford P."/>
            <person name="Roesch P."/>
            <person name="Rasko D."/>
            <person name="Buckles E.L."/>
            <person name="Liou S.-R."/>
            <person name="Boutin A."/>
            <person name="Hackett J."/>
            <person name="Stroud D."/>
            <person name="Mayhew G.F."/>
            <person name="Rose D.J."/>
            <person name="Zhou S."/>
            <person name="Schwartz D.C."/>
            <person name="Perna N.T."/>
            <person name="Mobley H.L.T."/>
            <person name="Donnenberg M.S."/>
            <person name="Blattner F.R."/>
        </authorList>
    </citation>
    <scope>NUCLEOTIDE SEQUENCE [LARGE SCALE GENOMIC DNA]</scope>
    <source>
        <strain>CFT073 / ATCC 700928 / UPEC</strain>
    </source>
</reference>
<protein>
    <recommendedName>
        <fullName>Glutamine transport system permease protein GlnP</fullName>
    </recommendedName>
</protein>
<gene>
    <name type="primary">glnP</name>
    <name type="ordered locus">c0895</name>
</gene>
<sequence>MQFDWSAIWPAIPLLIEGAKMTLWISVLGLAGGLVIGLLAGFARTFGGWIANHVALVFIEVIRGTPIVVQVMFIYFALPMAFNDLRIDPFTAAVVTIMINSGAYIAEITRGAVLSIHKGFREAGLALGLSRWETIRYVILPLALRRMLPPLGNQWIISIKDTSLFIVIGVAELTRQGQEIIAGNFRALEIWSAVAVFYLIITLVLSFILRRLERRMKIL</sequence>
<name>GLNP_ECOL6</name>
<dbReference type="EMBL" id="AE014075">
    <property type="protein sequence ID" value="AAN79368.1"/>
    <property type="molecule type" value="Genomic_DNA"/>
</dbReference>
<dbReference type="RefSeq" id="WP_001159065.1">
    <property type="nucleotide sequence ID" value="NZ_CP051263.1"/>
</dbReference>
<dbReference type="SMR" id="P0AEQ7"/>
<dbReference type="STRING" id="199310.c0895"/>
<dbReference type="GeneID" id="93776618"/>
<dbReference type="KEGG" id="ecc:c0895"/>
<dbReference type="eggNOG" id="COG0765">
    <property type="taxonomic scope" value="Bacteria"/>
</dbReference>
<dbReference type="HOGENOM" id="CLU_019602_1_0_6"/>
<dbReference type="BioCyc" id="ECOL199310:C0895-MONOMER"/>
<dbReference type="Proteomes" id="UP000001410">
    <property type="component" value="Chromosome"/>
</dbReference>
<dbReference type="GO" id="GO:0043190">
    <property type="term" value="C:ATP-binding cassette (ABC) transporter complex"/>
    <property type="evidence" value="ECO:0007669"/>
    <property type="project" value="InterPro"/>
</dbReference>
<dbReference type="GO" id="GO:0022857">
    <property type="term" value="F:transmembrane transporter activity"/>
    <property type="evidence" value="ECO:0007669"/>
    <property type="project" value="InterPro"/>
</dbReference>
<dbReference type="GO" id="GO:0006865">
    <property type="term" value="P:amino acid transport"/>
    <property type="evidence" value="ECO:0007669"/>
    <property type="project" value="UniProtKB-KW"/>
</dbReference>
<dbReference type="CDD" id="cd06261">
    <property type="entry name" value="TM_PBP2"/>
    <property type="match status" value="1"/>
</dbReference>
<dbReference type="FunFam" id="1.10.3720.10:FF:000011">
    <property type="entry name" value="Glutamine ABC transporter permease GlnP"/>
    <property type="match status" value="1"/>
</dbReference>
<dbReference type="Gene3D" id="1.10.3720.10">
    <property type="entry name" value="MetI-like"/>
    <property type="match status" value="1"/>
</dbReference>
<dbReference type="InterPro" id="IPR010065">
    <property type="entry name" value="AA_ABC_transptr_permease_3TM"/>
</dbReference>
<dbReference type="InterPro" id="IPR043429">
    <property type="entry name" value="ArtM/GltK/GlnP/TcyL/YhdX-like"/>
</dbReference>
<dbReference type="InterPro" id="IPR000515">
    <property type="entry name" value="MetI-like"/>
</dbReference>
<dbReference type="InterPro" id="IPR035906">
    <property type="entry name" value="MetI-like_sf"/>
</dbReference>
<dbReference type="NCBIfam" id="TIGR01726">
    <property type="entry name" value="HEQRo_perm_3TM"/>
    <property type="match status" value="1"/>
</dbReference>
<dbReference type="NCBIfam" id="NF007028">
    <property type="entry name" value="PRK09494.1"/>
    <property type="match status" value="1"/>
</dbReference>
<dbReference type="PANTHER" id="PTHR30614:SF20">
    <property type="entry name" value="GLUTAMINE TRANSPORT SYSTEM PERMEASE PROTEIN GLNP"/>
    <property type="match status" value="1"/>
</dbReference>
<dbReference type="PANTHER" id="PTHR30614">
    <property type="entry name" value="MEMBRANE COMPONENT OF AMINO ACID ABC TRANSPORTER"/>
    <property type="match status" value="1"/>
</dbReference>
<dbReference type="Pfam" id="PF00528">
    <property type="entry name" value="BPD_transp_1"/>
    <property type="match status" value="1"/>
</dbReference>
<dbReference type="SUPFAM" id="SSF161098">
    <property type="entry name" value="MetI-like"/>
    <property type="match status" value="1"/>
</dbReference>
<dbReference type="PROSITE" id="PS50928">
    <property type="entry name" value="ABC_TM1"/>
    <property type="match status" value="1"/>
</dbReference>